<dbReference type="EC" id="1.7.1.1"/>
<dbReference type="EMBL" id="X14059">
    <property type="protein sequence ID" value="CAA32217.1"/>
    <property type="molecule type" value="Genomic_DNA"/>
</dbReference>
<dbReference type="EMBL" id="X06134">
    <property type="protein sequence ID" value="CAA29497.1"/>
    <property type="molecule type" value="mRNA"/>
</dbReference>
<dbReference type="PIR" id="S04839">
    <property type="entry name" value="RDNTNS"/>
</dbReference>
<dbReference type="RefSeq" id="XP_016462202.1">
    <property type="nucleotide sequence ID" value="XM_016606716.1"/>
</dbReference>
<dbReference type="SMR" id="P08509"/>
<dbReference type="STRING" id="4097.P08509"/>
<dbReference type="PaxDb" id="4097-P08509"/>
<dbReference type="KEGG" id="nta:107785409"/>
<dbReference type="OMA" id="MNNCWYT"/>
<dbReference type="OrthoDB" id="432685at2759"/>
<dbReference type="PhylomeDB" id="P08509"/>
<dbReference type="Proteomes" id="UP000084051">
    <property type="component" value="Unplaced"/>
</dbReference>
<dbReference type="GO" id="GO:0071949">
    <property type="term" value="F:FAD binding"/>
    <property type="evidence" value="ECO:0000250"/>
    <property type="project" value="UniProtKB"/>
</dbReference>
<dbReference type="GO" id="GO:0020037">
    <property type="term" value="F:heme binding"/>
    <property type="evidence" value="ECO:0007669"/>
    <property type="project" value="InterPro"/>
</dbReference>
<dbReference type="GO" id="GO:0030151">
    <property type="term" value="F:molybdenum ion binding"/>
    <property type="evidence" value="ECO:0000250"/>
    <property type="project" value="UniProtKB"/>
</dbReference>
<dbReference type="GO" id="GO:0043546">
    <property type="term" value="F:molybdopterin cofactor binding"/>
    <property type="evidence" value="ECO:0007669"/>
    <property type="project" value="InterPro"/>
</dbReference>
<dbReference type="GO" id="GO:0009703">
    <property type="term" value="F:nitrate reductase (NADH) activity"/>
    <property type="evidence" value="ECO:0000318"/>
    <property type="project" value="GO_Central"/>
</dbReference>
<dbReference type="GO" id="GO:0050464">
    <property type="term" value="F:nitrate reductase (NADPH) activity"/>
    <property type="evidence" value="ECO:0007669"/>
    <property type="project" value="InterPro"/>
</dbReference>
<dbReference type="GO" id="GO:0042128">
    <property type="term" value="P:nitrate assimilation"/>
    <property type="evidence" value="ECO:0000318"/>
    <property type="project" value="GO_Central"/>
</dbReference>
<dbReference type="GO" id="GO:0006809">
    <property type="term" value="P:nitric oxide biosynthetic process"/>
    <property type="evidence" value="ECO:0000318"/>
    <property type="project" value="GO_Central"/>
</dbReference>
<dbReference type="CDD" id="cd06183">
    <property type="entry name" value="cyt_b5_reduct_like"/>
    <property type="match status" value="1"/>
</dbReference>
<dbReference type="CDD" id="cd02112">
    <property type="entry name" value="eukary_NR_Moco"/>
    <property type="match status" value="1"/>
</dbReference>
<dbReference type="FunFam" id="2.40.30.10:FF:000021">
    <property type="entry name" value="NADH-cytochrome b5 reductase"/>
    <property type="match status" value="1"/>
</dbReference>
<dbReference type="FunFam" id="2.60.40.650:FF:000001">
    <property type="entry name" value="Nitrate reductase"/>
    <property type="match status" value="1"/>
</dbReference>
<dbReference type="FunFam" id="3.10.120.10:FF:000008">
    <property type="entry name" value="Nitrate reductase"/>
    <property type="match status" value="1"/>
</dbReference>
<dbReference type="FunFam" id="3.90.420.10:FF:000003">
    <property type="entry name" value="Nitrate reductase"/>
    <property type="match status" value="1"/>
</dbReference>
<dbReference type="FunFam" id="3.40.50.80:FF:000025">
    <property type="entry name" value="Nitrate reductase [NADH]"/>
    <property type="match status" value="1"/>
</dbReference>
<dbReference type="Gene3D" id="2.60.40.650">
    <property type="match status" value="1"/>
</dbReference>
<dbReference type="Gene3D" id="3.10.120.10">
    <property type="entry name" value="Cytochrome b5-like heme/steroid binding domain"/>
    <property type="match status" value="1"/>
</dbReference>
<dbReference type="Gene3D" id="3.40.50.80">
    <property type="entry name" value="Nucleotide-binding domain of ferredoxin-NADP reductase (FNR) module"/>
    <property type="match status" value="1"/>
</dbReference>
<dbReference type="Gene3D" id="3.90.420.10">
    <property type="entry name" value="Oxidoreductase, molybdopterin-binding domain"/>
    <property type="match status" value="1"/>
</dbReference>
<dbReference type="Gene3D" id="2.40.30.10">
    <property type="entry name" value="Translation factors"/>
    <property type="match status" value="1"/>
</dbReference>
<dbReference type="InterPro" id="IPR008333">
    <property type="entry name" value="Cbr1-like_FAD-bd_dom"/>
</dbReference>
<dbReference type="InterPro" id="IPR001199">
    <property type="entry name" value="Cyt_B5-like_heme/steroid-bd"/>
</dbReference>
<dbReference type="InterPro" id="IPR036400">
    <property type="entry name" value="Cyt_B5-like_heme/steroid_sf"/>
</dbReference>
<dbReference type="InterPro" id="IPR018506">
    <property type="entry name" value="Cyt_B5_heme-BS"/>
</dbReference>
<dbReference type="InterPro" id="IPR017927">
    <property type="entry name" value="FAD-bd_FR_type"/>
</dbReference>
<dbReference type="InterPro" id="IPR001709">
    <property type="entry name" value="Flavoprot_Pyr_Nucl_cyt_Rdtase"/>
</dbReference>
<dbReference type="InterPro" id="IPR039261">
    <property type="entry name" value="FNR_nucleotide-bd"/>
</dbReference>
<dbReference type="InterPro" id="IPR014756">
    <property type="entry name" value="Ig_E-set"/>
</dbReference>
<dbReference type="InterPro" id="IPR005066">
    <property type="entry name" value="MoCF_OxRdtse_dimer"/>
</dbReference>
<dbReference type="InterPro" id="IPR008335">
    <property type="entry name" value="Mopterin_OxRdtase_euk"/>
</dbReference>
<dbReference type="InterPro" id="IPR012137">
    <property type="entry name" value="Nitr_rd_NADH"/>
</dbReference>
<dbReference type="InterPro" id="IPR001433">
    <property type="entry name" value="OxRdtase_FAD/NAD-bd"/>
</dbReference>
<dbReference type="InterPro" id="IPR000572">
    <property type="entry name" value="OxRdtase_Mopterin-bd_dom"/>
</dbReference>
<dbReference type="InterPro" id="IPR036374">
    <property type="entry name" value="OxRdtase_Mopterin-bd_sf"/>
</dbReference>
<dbReference type="InterPro" id="IPR022407">
    <property type="entry name" value="OxRdtase_Mopterin_BS"/>
</dbReference>
<dbReference type="InterPro" id="IPR017938">
    <property type="entry name" value="Riboflavin_synthase-like_b-brl"/>
</dbReference>
<dbReference type="PANTHER" id="PTHR19372:SF7">
    <property type="entry name" value="SULFITE OXIDASE, MITOCHONDRIAL"/>
    <property type="match status" value="1"/>
</dbReference>
<dbReference type="PANTHER" id="PTHR19372">
    <property type="entry name" value="SULFITE REDUCTASE"/>
    <property type="match status" value="1"/>
</dbReference>
<dbReference type="Pfam" id="PF00173">
    <property type="entry name" value="Cyt-b5"/>
    <property type="match status" value="1"/>
</dbReference>
<dbReference type="Pfam" id="PF00970">
    <property type="entry name" value="FAD_binding_6"/>
    <property type="match status" value="1"/>
</dbReference>
<dbReference type="Pfam" id="PF03404">
    <property type="entry name" value="Mo-co_dimer"/>
    <property type="match status" value="1"/>
</dbReference>
<dbReference type="Pfam" id="PF00175">
    <property type="entry name" value="NAD_binding_1"/>
    <property type="match status" value="1"/>
</dbReference>
<dbReference type="Pfam" id="PF00174">
    <property type="entry name" value="Oxidored_molyb"/>
    <property type="match status" value="1"/>
</dbReference>
<dbReference type="PIRSF" id="PIRSF000233">
    <property type="entry name" value="Nitr_rd_NADH"/>
    <property type="match status" value="1"/>
</dbReference>
<dbReference type="PRINTS" id="PR00406">
    <property type="entry name" value="CYTB5RDTASE"/>
</dbReference>
<dbReference type="PRINTS" id="PR00363">
    <property type="entry name" value="CYTOCHROMEB5"/>
</dbReference>
<dbReference type="PRINTS" id="PR00407">
    <property type="entry name" value="EUMOPTERIN"/>
</dbReference>
<dbReference type="PRINTS" id="PR00371">
    <property type="entry name" value="FPNCR"/>
</dbReference>
<dbReference type="SMART" id="SM01117">
    <property type="entry name" value="Cyt-b5"/>
    <property type="match status" value="1"/>
</dbReference>
<dbReference type="SUPFAM" id="SSF55856">
    <property type="entry name" value="Cytochrome b5-like heme/steroid binding domain"/>
    <property type="match status" value="1"/>
</dbReference>
<dbReference type="SUPFAM" id="SSF81296">
    <property type="entry name" value="E set domains"/>
    <property type="match status" value="1"/>
</dbReference>
<dbReference type="SUPFAM" id="SSF52343">
    <property type="entry name" value="Ferredoxin reductase-like, C-terminal NADP-linked domain"/>
    <property type="match status" value="1"/>
</dbReference>
<dbReference type="SUPFAM" id="SSF56524">
    <property type="entry name" value="Oxidoreductase molybdopterin-binding domain"/>
    <property type="match status" value="1"/>
</dbReference>
<dbReference type="SUPFAM" id="SSF63380">
    <property type="entry name" value="Riboflavin synthase domain-like"/>
    <property type="match status" value="1"/>
</dbReference>
<dbReference type="PROSITE" id="PS00191">
    <property type="entry name" value="CYTOCHROME_B5_1"/>
    <property type="match status" value="1"/>
</dbReference>
<dbReference type="PROSITE" id="PS50255">
    <property type="entry name" value="CYTOCHROME_B5_2"/>
    <property type="match status" value="1"/>
</dbReference>
<dbReference type="PROSITE" id="PS51384">
    <property type="entry name" value="FAD_FR"/>
    <property type="match status" value="1"/>
</dbReference>
<dbReference type="PROSITE" id="PS00559">
    <property type="entry name" value="MOLYBDOPTERIN_EUK"/>
    <property type="match status" value="1"/>
</dbReference>
<accession>P08509</accession>
<name>NIA2_TOBAC</name>
<keyword id="KW-1015">Disulfide bond</keyword>
<keyword id="KW-0274">FAD</keyword>
<keyword id="KW-0285">Flavoprotein</keyword>
<keyword id="KW-0349">Heme</keyword>
<keyword id="KW-0408">Iron</keyword>
<keyword id="KW-0479">Metal-binding</keyword>
<keyword id="KW-0500">Molybdenum</keyword>
<keyword id="KW-0520">NAD</keyword>
<keyword id="KW-0534">Nitrate assimilation</keyword>
<keyword id="KW-0560">Oxidoreductase</keyword>
<keyword id="KW-1185">Reference proteome</keyword>
<organism>
    <name type="scientific">Nicotiana tabacum</name>
    <name type="common">Common tobacco</name>
    <dbReference type="NCBI Taxonomy" id="4097"/>
    <lineage>
        <taxon>Eukaryota</taxon>
        <taxon>Viridiplantae</taxon>
        <taxon>Streptophyta</taxon>
        <taxon>Embryophyta</taxon>
        <taxon>Tracheophyta</taxon>
        <taxon>Spermatophyta</taxon>
        <taxon>Magnoliopsida</taxon>
        <taxon>eudicotyledons</taxon>
        <taxon>Gunneridae</taxon>
        <taxon>Pentapetalae</taxon>
        <taxon>asterids</taxon>
        <taxon>lamiids</taxon>
        <taxon>Solanales</taxon>
        <taxon>Solanaceae</taxon>
        <taxon>Nicotianoideae</taxon>
        <taxon>Nicotianeae</taxon>
        <taxon>Nicotiana</taxon>
    </lineage>
</organism>
<gene>
    <name type="primary">NIA2</name>
</gene>
<evidence type="ECO:0000250" key="1"/>
<evidence type="ECO:0000250" key="2">
    <source>
        <dbReference type="UniProtKB" id="A0A286R227"/>
    </source>
</evidence>
<evidence type="ECO:0000250" key="3">
    <source>
        <dbReference type="UniProtKB" id="P17571"/>
    </source>
</evidence>
<evidence type="ECO:0000250" key="4">
    <source>
        <dbReference type="UniProtKB" id="P49050"/>
    </source>
</evidence>
<evidence type="ECO:0000255" key="5"/>
<evidence type="ECO:0000255" key="6">
    <source>
        <dbReference type="PROSITE-ProRule" id="PRU00279"/>
    </source>
</evidence>
<evidence type="ECO:0000255" key="7">
    <source>
        <dbReference type="PROSITE-ProRule" id="PRU00716"/>
    </source>
</evidence>
<evidence type="ECO:0000256" key="8">
    <source>
        <dbReference type="SAM" id="MobiDB-lite"/>
    </source>
</evidence>
<evidence type="ECO:0000305" key="9"/>
<sequence>MAASVENRQFSHLEAGLSRSFKPRSDSPVRGCNFPSPNSTNFQKKPNSTIYLDYSSSEDDDDDDEKNEYLQMIKKGNSELEPSVHDTRDEGTADNWIERNFSMIRLTGKHPFNSEPPLNRLMHHGFITPVPLHYVRNHGPVPKGTWDDWTVEVTGLVKRPMKFTMDQLVNEFPCRELPVTLVCAGNRRKEQNMVKQTIGFNWGAAAVSTTIWRGVPLRALLKRCGVFSKNKGALNVCFEGADVLPGGGGSKYGTSIKKEFAMDPARDIIVAYMQNGEKLAPDHGFPVRMIIPGFIGGRMVKWIKRIIVTTQESDSYYHFKDNRVLPPHVDAELANTEAWWYKPEYIINELNINSVITTPCHEEILPINAWTTQRPYTLRGYSYSGGGKKVTRVEVTLDGGETWQVSTLDHPEKPTKYGKYWCWCFWSLEVEVLDLLSAKEIAVRAWDETLNTQPEKLIWNVMGMMNNCWFRVKMNVCKPHKGEIGIVFEHPTQPGNQSGGWMAKERHLEISAEAPQTLKKSISTPFMNTASKMYSMSEVRKHSSADSAWIIVHGHIYDATRFLKDHPGGTDSILINAGTDCTEEFDAIHSDKAKKLLEDFRIGELITTGYTSDSPGNSVHGSSSFSSFLAPIKELVPAQRSVALIPREKIPCKLIDKQSISHDVRKFRFALPSEDQVLGLPVGKHIFLCAVIDDKLCMRAYTPTSTIDEVGYFELVVKIYFKGIHPKFPNGGQMSQYLDSMPLGSFLDVKGPLGHIEYQGKGNFLVHGKQKFAKKLAMIAGGTGITPVYQVMQAILKDPEDDTEMYVVYANRTEDDILLKEELDSWAEKIPERVKVWYVVQDSIKEGWKYSIGFITEAILREHIPEPSHTTLALACGPPPMIQFAVNPNLEKMGYDIKDSLLVF</sequence>
<feature type="chain" id="PRO_0000166073" description="Nitrate reductase [NADH] 2">
    <location>
        <begin position="1"/>
        <end position="904"/>
    </location>
</feature>
<feature type="domain" description="Cytochrome b5 heme-binding" evidence="6">
    <location>
        <begin position="531"/>
        <end position="606"/>
    </location>
</feature>
<feature type="domain" description="FAD-binding FR-type" evidence="7">
    <location>
        <begin position="647"/>
        <end position="759"/>
    </location>
</feature>
<feature type="region of interest" description="Disordered" evidence="8">
    <location>
        <begin position="1"/>
        <end position="65"/>
    </location>
</feature>
<feature type="compositionally biased region" description="Polar residues" evidence="8">
    <location>
        <begin position="1"/>
        <end position="10"/>
    </location>
</feature>
<feature type="compositionally biased region" description="Polar residues" evidence="8">
    <location>
        <begin position="35"/>
        <end position="50"/>
    </location>
</feature>
<feature type="compositionally biased region" description="Acidic residues" evidence="8">
    <location>
        <begin position="56"/>
        <end position="65"/>
    </location>
</feature>
<feature type="binding site" evidence="4">
    <location>
        <position position="183"/>
    </location>
    <ligand>
        <name>Mo-molybdopterin</name>
        <dbReference type="ChEBI" id="CHEBI:71302"/>
    </ligand>
    <ligandPart>
        <name>Mo</name>
        <dbReference type="ChEBI" id="CHEBI:28685"/>
    </ligandPart>
</feature>
<feature type="binding site" description="axial binding residue" evidence="6">
    <location>
        <position position="566"/>
    </location>
    <ligand>
        <name>heme</name>
        <dbReference type="ChEBI" id="CHEBI:30413"/>
    </ligand>
    <ligandPart>
        <name>Fe</name>
        <dbReference type="ChEBI" id="CHEBI:18248"/>
    </ligandPart>
</feature>
<feature type="binding site" description="axial binding residue" evidence="6">
    <location>
        <position position="589"/>
    </location>
    <ligand>
        <name>heme</name>
        <dbReference type="ChEBI" id="CHEBI:30413"/>
    </ligand>
    <ligandPart>
        <name>Fe</name>
        <dbReference type="ChEBI" id="CHEBI:18248"/>
    </ligandPart>
</feature>
<feature type="binding site" evidence="2">
    <location>
        <begin position="699"/>
        <end position="702"/>
    </location>
    <ligand>
        <name>FAD</name>
        <dbReference type="ChEBI" id="CHEBI:57692"/>
    </ligand>
</feature>
<feature type="binding site" evidence="2">
    <location>
        <begin position="716"/>
        <end position="720"/>
    </location>
    <ligand>
        <name>FAD</name>
        <dbReference type="ChEBI" id="CHEBI:57692"/>
    </ligand>
</feature>
<feature type="binding site" evidence="3">
    <location>
        <position position="721"/>
    </location>
    <ligand>
        <name>FAD</name>
        <dbReference type="ChEBI" id="CHEBI:57692"/>
    </ligand>
</feature>
<feature type="binding site" evidence="2">
    <location>
        <position position="728"/>
    </location>
    <ligand>
        <name>FAD</name>
        <dbReference type="ChEBI" id="CHEBI:57692"/>
    </ligand>
</feature>
<feature type="binding site" evidence="2">
    <location>
        <begin position="733"/>
        <end position="735"/>
    </location>
    <ligand>
        <name>FAD</name>
        <dbReference type="ChEBI" id="CHEBI:57692"/>
    </ligand>
</feature>
<feature type="binding site" evidence="2">
    <location>
        <position position="786"/>
    </location>
    <ligand>
        <name>FAD</name>
        <dbReference type="ChEBI" id="CHEBI:57692"/>
    </ligand>
</feature>
<feature type="disulfide bond" description="Interchain" evidence="5">
    <location>
        <position position="422"/>
    </location>
</feature>
<reference key="1">
    <citation type="journal article" date="1989" name="Plant Mol. Biol.">
        <title>Complete nucleotide sequence of the two homeologous tobacco nitrate reductase genes.</title>
        <authorList>
            <person name="Vaucheret H."/>
            <person name="Kronenberger J."/>
            <person name="Rouze P."/>
            <person name="Caboche M."/>
        </authorList>
    </citation>
    <scope>NUCLEOTIDE SEQUENCE</scope>
    <source>
        <strain>cv. Xanthi</strain>
        <tissue>Leaf</tissue>
    </source>
</reference>
<reference key="2">
    <citation type="journal article" date="1987" name="Mol. Gen. Genet.">
        <title>Cloning of DNA fragments complementary to tobacco nitrate reductase mRNA and encoding epitopes common to the nitrate reductases from higher plants.</title>
        <authorList>
            <person name="Calza R."/>
            <person name="Huttner E."/>
            <person name="Vincentz M."/>
            <person name="Rouze P."/>
            <person name="Galangau F."/>
            <person name="Vaucheret H."/>
            <person name="Cherel I."/>
            <person name="Meyer C."/>
            <person name="Kronenberger J."/>
            <person name="Caboche M."/>
        </authorList>
    </citation>
    <scope>NUCLEOTIDE SEQUENCE OF 171-724</scope>
</reference>
<comment type="function">
    <text>Nitrate reductase is a key enzyme involved in the first step of nitrate assimilation in plants, fungi and bacteria.</text>
</comment>
<comment type="catalytic activity">
    <reaction>
        <text>nitrite + NAD(+) + H2O = nitrate + NADH + H(+)</text>
        <dbReference type="Rhea" id="RHEA:17913"/>
        <dbReference type="ChEBI" id="CHEBI:15377"/>
        <dbReference type="ChEBI" id="CHEBI:15378"/>
        <dbReference type="ChEBI" id="CHEBI:16301"/>
        <dbReference type="ChEBI" id="CHEBI:17632"/>
        <dbReference type="ChEBI" id="CHEBI:57540"/>
        <dbReference type="ChEBI" id="CHEBI:57945"/>
        <dbReference type="EC" id="1.7.1.1"/>
    </reaction>
</comment>
<comment type="cofactor">
    <cofactor evidence="1">
        <name>FAD</name>
        <dbReference type="ChEBI" id="CHEBI:57692"/>
    </cofactor>
    <text evidence="1">Binds 1 FAD per subunit.</text>
</comment>
<comment type="cofactor">
    <cofactor evidence="1">
        <name>heme</name>
        <dbReference type="ChEBI" id="CHEBI:30413"/>
    </cofactor>
    <text evidence="1">Binds 1 heme group per subunit.</text>
</comment>
<comment type="cofactor">
    <cofactor evidence="1">
        <name>Mo-molybdopterin</name>
        <dbReference type="ChEBI" id="CHEBI:71302"/>
    </cofactor>
    <text evidence="1">Binds 1 Mo-molybdopterin (Mo-MPT) cofactor per subunit.</text>
</comment>
<comment type="activity regulation">
    <text>Regulated by the nitrogen source and controlled by the circadian rhythm.</text>
</comment>
<comment type="subunit">
    <text>Homodimer.</text>
</comment>
<comment type="similarity">
    <text evidence="9">Belongs to the nitrate reductase family.</text>
</comment>
<proteinExistence type="evidence at transcript level"/>
<protein>
    <recommendedName>
        <fullName>Nitrate reductase [NADH] 2</fullName>
        <shortName>NR2</shortName>
        <ecNumber>1.7.1.1</ecNumber>
    </recommendedName>
</protein>